<keyword id="KW-1185">Reference proteome</keyword>
<keyword id="KW-0694">RNA-binding</keyword>
<keyword id="KW-0346">Stress response</keyword>
<evidence type="ECO:0000255" key="1">
    <source>
        <dbReference type="HAMAP-Rule" id="MF_00436"/>
    </source>
</evidence>
<evidence type="ECO:0000255" key="2">
    <source>
        <dbReference type="PROSITE-ProRule" id="PRU01346"/>
    </source>
</evidence>
<dbReference type="EMBL" id="CP000542">
    <property type="protein sequence ID" value="ABM55868.1"/>
    <property type="molecule type" value="Genomic_DNA"/>
</dbReference>
<dbReference type="RefSeq" id="WP_011807887.1">
    <property type="nucleotide sequence ID" value="NC_008786.1"/>
</dbReference>
<dbReference type="SMR" id="A1WE11"/>
<dbReference type="STRING" id="391735.Veis_0075"/>
<dbReference type="GeneID" id="76458834"/>
<dbReference type="KEGG" id="vei:Veis_0075"/>
<dbReference type="eggNOG" id="COG1923">
    <property type="taxonomic scope" value="Bacteria"/>
</dbReference>
<dbReference type="HOGENOM" id="CLU_113688_2_2_4"/>
<dbReference type="OrthoDB" id="9799751at2"/>
<dbReference type="Proteomes" id="UP000000374">
    <property type="component" value="Chromosome"/>
</dbReference>
<dbReference type="GO" id="GO:0005829">
    <property type="term" value="C:cytosol"/>
    <property type="evidence" value="ECO:0007669"/>
    <property type="project" value="TreeGrafter"/>
</dbReference>
<dbReference type="GO" id="GO:0003723">
    <property type="term" value="F:RNA binding"/>
    <property type="evidence" value="ECO:0007669"/>
    <property type="project" value="UniProtKB-UniRule"/>
</dbReference>
<dbReference type="GO" id="GO:0006355">
    <property type="term" value="P:regulation of DNA-templated transcription"/>
    <property type="evidence" value="ECO:0007669"/>
    <property type="project" value="InterPro"/>
</dbReference>
<dbReference type="GO" id="GO:0043487">
    <property type="term" value="P:regulation of RNA stability"/>
    <property type="evidence" value="ECO:0007669"/>
    <property type="project" value="TreeGrafter"/>
</dbReference>
<dbReference type="GO" id="GO:0045974">
    <property type="term" value="P:regulation of translation, ncRNA-mediated"/>
    <property type="evidence" value="ECO:0007669"/>
    <property type="project" value="TreeGrafter"/>
</dbReference>
<dbReference type="CDD" id="cd01716">
    <property type="entry name" value="Hfq"/>
    <property type="match status" value="1"/>
</dbReference>
<dbReference type="FunFam" id="2.30.30.100:FF:000001">
    <property type="entry name" value="RNA-binding protein Hfq"/>
    <property type="match status" value="1"/>
</dbReference>
<dbReference type="Gene3D" id="2.30.30.100">
    <property type="match status" value="1"/>
</dbReference>
<dbReference type="HAMAP" id="MF_00436">
    <property type="entry name" value="Hfq"/>
    <property type="match status" value="1"/>
</dbReference>
<dbReference type="InterPro" id="IPR005001">
    <property type="entry name" value="Hfq"/>
</dbReference>
<dbReference type="InterPro" id="IPR010920">
    <property type="entry name" value="LSM_dom_sf"/>
</dbReference>
<dbReference type="InterPro" id="IPR047575">
    <property type="entry name" value="Sm"/>
</dbReference>
<dbReference type="NCBIfam" id="TIGR02383">
    <property type="entry name" value="Hfq"/>
    <property type="match status" value="1"/>
</dbReference>
<dbReference type="NCBIfam" id="NF001602">
    <property type="entry name" value="PRK00395.1"/>
    <property type="match status" value="1"/>
</dbReference>
<dbReference type="PANTHER" id="PTHR34772">
    <property type="entry name" value="RNA-BINDING PROTEIN HFQ"/>
    <property type="match status" value="1"/>
</dbReference>
<dbReference type="PANTHER" id="PTHR34772:SF1">
    <property type="entry name" value="RNA-BINDING PROTEIN HFQ"/>
    <property type="match status" value="1"/>
</dbReference>
<dbReference type="Pfam" id="PF17209">
    <property type="entry name" value="Hfq"/>
    <property type="match status" value="1"/>
</dbReference>
<dbReference type="SUPFAM" id="SSF50182">
    <property type="entry name" value="Sm-like ribonucleoproteins"/>
    <property type="match status" value="1"/>
</dbReference>
<dbReference type="PROSITE" id="PS52002">
    <property type="entry name" value="SM"/>
    <property type="match status" value="1"/>
</dbReference>
<feature type="chain" id="PRO_1000025941" description="RNA-binding protein Hfq">
    <location>
        <begin position="1"/>
        <end position="84"/>
    </location>
</feature>
<feature type="domain" description="Sm" evidence="2">
    <location>
        <begin position="10"/>
        <end position="69"/>
    </location>
</feature>
<reference key="1">
    <citation type="submission" date="2006-12" db="EMBL/GenBank/DDBJ databases">
        <title>Complete sequence of chromosome 1 of Verminephrobacter eiseniae EF01-2.</title>
        <authorList>
            <person name="Copeland A."/>
            <person name="Lucas S."/>
            <person name="Lapidus A."/>
            <person name="Barry K."/>
            <person name="Detter J.C."/>
            <person name="Glavina del Rio T."/>
            <person name="Dalin E."/>
            <person name="Tice H."/>
            <person name="Pitluck S."/>
            <person name="Chertkov O."/>
            <person name="Brettin T."/>
            <person name="Bruce D."/>
            <person name="Han C."/>
            <person name="Tapia R."/>
            <person name="Gilna P."/>
            <person name="Schmutz J."/>
            <person name="Larimer F."/>
            <person name="Land M."/>
            <person name="Hauser L."/>
            <person name="Kyrpides N."/>
            <person name="Kim E."/>
            <person name="Stahl D."/>
            <person name="Richardson P."/>
        </authorList>
    </citation>
    <scope>NUCLEOTIDE SEQUENCE [LARGE SCALE GENOMIC DNA]</scope>
    <source>
        <strain>EF01-2</strain>
    </source>
</reference>
<proteinExistence type="inferred from homology"/>
<name>HFQ_VEREI</name>
<comment type="function">
    <text evidence="1">RNA chaperone that binds small regulatory RNA (sRNAs) and mRNAs to facilitate mRNA translational regulation in response to envelope stress, environmental stress and changes in metabolite concentrations. Also binds with high specificity to tRNAs.</text>
</comment>
<comment type="subunit">
    <text evidence="1">Homohexamer.</text>
</comment>
<comment type="similarity">
    <text evidence="1">Belongs to the Hfq family.</text>
</comment>
<organism>
    <name type="scientific">Verminephrobacter eiseniae (strain EF01-2)</name>
    <dbReference type="NCBI Taxonomy" id="391735"/>
    <lineage>
        <taxon>Bacteria</taxon>
        <taxon>Pseudomonadati</taxon>
        <taxon>Pseudomonadota</taxon>
        <taxon>Betaproteobacteria</taxon>
        <taxon>Burkholderiales</taxon>
        <taxon>Comamonadaceae</taxon>
        <taxon>Verminephrobacter</taxon>
    </lineage>
</organism>
<accession>A1WE11</accession>
<sequence length="84" mass="9351">MSNKGQLLQEPFLNTLRREHVPVSIYLVNGIKLQGQIESFDQYVVLLRNTVTQMVFKHAISTIVPGRAVHFSTAEPADANSNNG</sequence>
<protein>
    <recommendedName>
        <fullName evidence="1">RNA-binding protein Hfq</fullName>
    </recommendedName>
</protein>
<gene>
    <name evidence="1" type="primary">hfq</name>
    <name type="ordered locus">Veis_0075</name>
</gene>